<protein>
    <recommendedName>
        <fullName evidence="7">E3 ubiquitin-protein ligase HEL1</fullName>
        <ecNumber evidence="1">2.3.2.31</ecNumber>
    </recommendedName>
    <alternativeName>
        <fullName evidence="5">Histone E3 ligase 1</fullName>
    </alternativeName>
    <alternativeName>
        <fullName evidence="6">RING-type E3 ubiquitin transferase HEL1</fullName>
    </alternativeName>
</protein>
<gene>
    <name evidence="5" type="primary">HEL1</name>
    <name evidence="8" type="ordered locus">YKR017C</name>
</gene>
<proteinExistence type="evidence at protein level"/>
<dbReference type="EC" id="2.3.2.31" evidence="1"/>
<dbReference type="EMBL" id="Z28242">
    <property type="protein sequence ID" value="CAA82089.1"/>
    <property type="molecule type" value="Genomic_DNA"/>
</dbReference>
<dbReference type="EMBL" id="BK006944">
    <property type="protein sequence ID" value="DAA09172.1"/>
    <property type="molecule type" value="Genomic_DNA"/>
</dbReference>
<dbReference type="PIR" id="S38086">
    <property type="entry name" value="S38086"/>
</dbReference>
<dbReference type="RefSeq" id="NP_012942.3">
    <property type="nucleotide sequence ID" value="NM_001179807.3"/>
</dbReference>
<dbReference type="SMR" id="P36113"/>
<dbReference type="BioGRID" id="34149">
    <property type="interactions" value="25"/>
</dbReference>
<dbReference type="DIP" id="DIP-4082N"/>
<dbReference type="FunCoup" id="P36113">
    <property type="interactions" value="702"/>
</dbReference>
<dbReference type="IntAct" id="P36113">
    <property type="interactions" value="5"/>
</dbReference>
<dbReference type="STRING" id="4932.YKR017C"/>
<dbReference type="iPTMnet" id="P36113"/>
<dbReference type="PaxDb" id="4932-YKR017C"/>
<dbReference type="PeptideAtlas" id="P36113"/>
<dbReference type="EnsemblFungi" id="YKR017C_mRNA">
    <property type="protein sequence ID" value="YKR017C"/>
    <property type="gene ID" value="YKR017C"/>
</dbReference>
<dbReference type="GeneID" id="853887"/>
<dbReference type="KEGG" id="sce:YKR017C"/>
<dbReference type="AGR" id="SGD:S000001725"/>
<dbReference type="SGD" id="S000001725">
    <property type="gene designation" value="HEL1"/>
</dbReference>
<dbReference type="VEuPathDB" id="FungiDB:YKR017C"/>
<dbReference type="eggNOG" id="KOG1815">
    <property type="taxonomic scope" value="Eukaryota"/>
</dbReference>
<dbReference type="GeneTree" id="ENSGT00940000155744"/>
<dbReference type="HOGENOM" id="CLU_009823_4_1_1"/>
<dbReference type="InParanoid" id="P36113"/>
<dbReference type="OMA" id="HRFCMIC"/>
<dbReference type="OrthoDB" id="10009520at2759"/>
<dbReference type="BioCyc" id="YEAST:G3O-31993-MONOMER"/>
<dbReference type="Reactome" id="R-SCE-5205685">
    <property type="pathway name" value="PINK1-PRKN Mediated Mitophagy"/>
</dbReference>
<dbReference type="Reactome" id="R-SCE-5689877">
    <property type="pathway name" value="Josephin domain DUBs"/>
</dbReference>
<dbReference type="Reactome" id="R-SCE-9646399">
    <property type="pathway name" value="Aggrephagy"/>
</dbReference>
<dbReference type="Reactome" id="R-SCE-983168">
    <property type="pathway name" value="Antigen processing: Ubiquitination &amp; Proteasome degradation"/>
</dbReference>
<dbReference type="UniPathway" id="UPA00143"/>
<dbReference type="BioGRID-ORCS" id="853887">
    <property type="hits" value="5 hits in 10 CRISPR screens"/>
</dbReference>
<dbReference type="PRO" id="PR:P36113"/>
<dbReference type="Proteomes" id="UP000002311">
    <property type="component" value="Chromosome XI"/>
</dbReference>
<dbReference type="RNAct" id="P36113">
    <property type="molecule type" value="protein"/>
</dbReference>
<dbReference type="GO" id="GO:0005737">
    <property type="term" value="C:cytoplasm"/>
    <property type="evidence" value="ECO:0000318"/>
    <property type="project" value="GO_Central"/>
</dbReference>
<dbReference type="GO" id="GO:0000151">
    <property type="term" value="C:ubiquitin ligase complex"/>
    <property type="evidence" value="ECO:0000318"/>
    <property type="project" value="GO_Central"/>
</dbReference>
<dbReference type="GO" id="GO:0031624">
    <property type="term" value="F:ubiquitin conjugating enzyme binding"/>
    <property type="evidence" value="ECO:0000318"/>
    <property type="project" value="GO_Central"/>
</dbReference>
<dbReference type="GO" id="GO:0061630">
    <property type="term" value="F:ubiquitin protein ligase activity"/>
    <property type="evidence" value="ECO:0000314"/>
    <property type="project" value="SGD"/>
</dbReference>
<dbReference type="GO" id="GO:0008270">
    <property type="term" value="F:zinc ion binding"/>
    <property type="evidence" value="ECO:0007669"/>
    <property type="project" value="UniProtKB-KW"/>
</dbReference>
<dbReference type="GO" id="GO:0036205">
    <property type="term" value="P:histone catabolic process"/>
    <property type="evidence" value="ECO:0000315"/>
    <property type="project" value="SGD"/>
</dbReference>
<dbReference type="GO" id="GO:0016567">
    <property type="term" value="P:protein ubiquitination"/>
    <property type="evidence" value="ECO:0007669"/>
    <property type="project" value="UniProtKB-UniPathway"/>
</dbReference>
<dbReference type="GO" id="GO:0006511">
    <property type="term" value="P:ubiquitin-dependent protein catabolic process"/>
    <property type="evidence" value="ECO:0000318"/>
    <property type="project" value="GO_Central"/>
</dbReference>
<dbReference type="CDD" id="cd20346">
    <property type="entry name" value="BRcat_RBR_ANKIB1"/>
    <property type="match status" value="1"/>
</dbReference>
<dbReference type="CDD" id="cd20356">
    <property type="entry name" value="Rcat_RBR_HHARI-like"/>
    <property type="match status" value="1"/>
</dbReference>
<dbReference type="CDD" id="cd16625">
    <property type="entry name" value="RING-HC_RBR_HEL2-like"/>
    <property type="match status" value="1"/>
</dbReference>
<dbReference type="FunFam" id="1.20.120.1750:FF:000031">
    <property type="entry name" value="RBR-type E3 ubiquitin transferase"/>
    <property type="match status" value="1"/>
</dbReference>
<dbReference type="FunFam" id="3.30.40.10:FF:000735">
    <property type="entry name" value="RBR-type E3 ubiquitin transferase"/>
    <property type="match status" value="1"/>
</dbReference>
<dbReference type="Gene3D" id="1.20.120.1750">
    <property type="match status" value="1"/>
</dbReference>
<dbReference type="Gene3D" id="3.30.40.10">
    <property type="entry name" value="Zinc/RING finger domain, C3HC4 (zinc finger)"/>
    <property type="match status" value="1"/>
</dbReference>
<dbReference type="InterPro" id="IPR045840">
    <property type="entry name" value="Ariadne"/>
</dbReference>
<dbReference type="InterPro" id="IPR048962">
    <property type="entry name" value="ARIH1-like_UBL"/>
</dbReference>
<dbReference type="InterPro" id="IPR031127">
    <property type="entry name" value="E3_UB_ligase_RBR"/>
</dbReference>
<dbReference type="InterPro" id="IPR002867">
    <property type="entry name" value="IBR_dom"/>
</dbReference>
<dbReference type="InterPro" id="IPR044066">
    <property type="entry name" value="TRIAD_supradom"/>
</dbReference>
<dbReference type="InterPro" id="IPR018957">
    <property type="entry name" value="Znf_C3HC4_RING-type"/>
</dbReference>
<dbReference type="InterPro" id="IPR001841">
    <property type="entry name" value="Znf_RING"/>
</dbReference>
<dbReference type="InterPro" id="IPR013083">
    <property type="entry name" value="Znf_RING/FYVE/PHD"/>
</dbReference>
<dbReference type="InterPro" id="IPR017907">
    <property type="entry name" value="Znf_RING_CS"/>
</dbReference>
<dbReference type="PANTHER" id="PTHR11685">
    <property type="entry name" value="RBR FAMILY RING FINGER AND IBR DOMAIN-CONTAINING"/>
    <property type="match status" value="1"/>
</dbReference>
<dbReference type="Pfam" id="PF19422">
    <property type="entry name" value="Ariadne"/>
    <property type="match status" value="1"/>
</dbReference>
<dbReference type="Pfam" id="PF01485">
    <property type="entry name" value="IBR"/>
    <property type="match status" value="1"/>
</dbReference>
<dbReference type="Pfam" id="PF22191">
    <property type="entry name" value="IBR_1"/>
    <property type="match status" value="1"/>
</dbReference>
<dbReference type="Pfam" id="PF21235">
    <property type="entry name" value="UBA_ARI1"/>
    <property type="match status" value="1"/>
</dbReference>
<dbReference type="Pfam" id="PF00097">
    <property type="entry name" value="zf-C3HC4"/>
    <property type="match status" value="1"/>
</dbReference>
<dbReference type="SMART" id="SM00647">
    <property type="entry name" value="IBR"/>
    <property type="match status" value="2"/>
</dbReference>
<dbReference type="SMART" id="SM00184">
    <property type="entry name" value="RING"/>
    <property type="match status" value="1"/>
</dbReference>
<dbReference type="SUPFAM" id="SSF57850">
    <property type="entry name" value="RING/U-box"/>
    <property type="match status" value="2"/>
</dbReference>
<dbReference type="PROSITE" id="PS51873">
    <property type="entry name" value="TRIAD"/>
    <property type="match status" value="1"/>
</dbReference>
<dbReference type="PROSITE" id="PS00518">
    <property type="entry name" value="ZF_RING_1"/>
    <property type="match status" value="1"/>
</dbReference>
<dbReference type="PROSITE" id="PS50089">
    <property type="entry name" value="ZF_RING_2"/>
    <property type="match status" value="1"/>
</dbReference>
<accession>P36113</accession>
<accession>D6VX82</accession>
<name>HEL1_YEAST</name>
<feature type="chain" id="PRO_0000056339" description="E3 ubiquitin-protein ligase HEL1">
    <location>
        <begin position="1"/>
        <end position="551"/>
    </location>
</feature>
<feature type="zinc finger region" description="RING-type 1" evidence="2">
    <location>
        <begin position="179"/>
        <end position="225"/>
    </location>
</feature>
<feature type="zinc finger region" description="IBR-type" evidence="2">
    <location>
        <begin position="242"/>
        <end position="314"/>
    </location>
</feature>
<feature type="zinc finger region" description="RING-type 2; atypical" evidence="2">
    <location>
        <begin position="341"/>
        <end position="370"/>
    </location>
</feature>
<feature type="region of interest" description="TRIAD supradomain" evidence="2">
    <location>
        <begin position="175"/>
        <end position="388"/>
    </location>
</feature>
<feature type="active site" evidence="2">
    <location>
        <position position="354"/>
    </location>
</feature>
<feature type="binding site" evidence="2">
    <location>
        <position position="179"/>
    </location>
    <ligand>
        <name>Zn(2+)</name>
        <dbReference type="ChEBI" id="CHEBI:29105"/>
        <label>1</label>
    </ligand>
</feature>
<feature type="binding site" evidence="2">
    <location>
        <position position="182"/>
    </location>
    <ligand>
        <name>Zn(2+)</name>
        <dbReference type="ChEBI" id="CHEBI:29105"/>
        <label>1</label>
    </ligand>
</feature>
<feature type="binding site" evidence="2">
    <location>
        <position position="200"/>
    </location>
    <ligand>
        <name>Zn(2+)</name>
        <dbReference type="ChEBI" id="CHEBI:29105"/>
        <label>1</label>
    </ligand>
</feature>
<feature type="binding site" evidence="2">
    <location>
        <position position="203"/>
    </location>
    <ligand>
        <name>Zn(2+)</name>
        <dbReference type="ChEBI" id="CHEBI:29105"/>
        <label>1</label>
    </ligand>
</feature>
<feature type="binding site" evidence="2">
    <location>
        <position position="301"/>
    </location>
    <ligand>
        <name>Zn(2+)</name>
        <dbReference type="ChEBI" id="CHEBI:29105"/>
        <label>2</label>
    </ligand>
</feature>
<feature type="binding site" evidence="2">
    <location>
        <position position="304"/>
    </location>
    <ligand>
        <name>Zn(2+)</name>
        <dbReference type="ChEBI" id="CHEBI:29105"/>
        <label>2</label>
    </ligand>
</feature>
<feature type="binding site" evidence="2">
    <location>
        <position position="309"/>
    </location>
    <ligand>
        <name>Zn(2+)</name>
        <dbReference type="ChEBI" id="CHEBI:29105"/>
        <label>2</label>
    </ligand>
</feature>
<feature type="binding site" evidence="2">
    <location>
        <position position="314"/>
    </location>
    <ligand>
        <name>Zn(2+)</name>
        <dbReference type="ChEBI" id="CHEBI:29105"/>
        <label>2</label>
    </ligand>
</feature>
<feature type="binding site" evidence="2">
    <location>
        <position position="341"/>
    </location>
    <ligand>
        <name>Zn(2+)</name>
        <dbReference type="ChEBI" id="CHEBI:29105"/>
        <label>3</label>
    </ligand>
</feature>
<feature type="binding site" evidence="2">
    <location>
        <position position="344"/>
    </location>
    <ligand>
        <name>Zn(2+)</name>
        <dbReference type="ChEBI" id="CHEBI:29105"/>
        <label>3</label>
    </ligand>
</feature>
<feature type="binding site" evidence="2">
    <location>
        <position position="359"/>
    </location>
    <ligand>
        <name>Zn(2+)</name>
        <dbReference type="ChEBI" id="CHEBI:29105"/>
        <label>3</label>
    </ligand>
</feature>
<feature type="binding site" evidence="2">
    <location>
        <position position="362"/>
    </location>
    <ligand>
        <name>Zn(2+)</name>
        <dbReference type="ChEBI" id="CHEBI:29105"/>
        <label>3</label>
    </ligand>
</feature>
<feature type="binding site" evidence="2">
    <location>
        <position position="367"/>
    </location>
    <ligand>
        <name>Zn(2+)</name>
        <dbReference type="ChEBI" id="CHEBI:29105"/>
        <label>4</label>
    </ligand>
</feature>
<feature type="binding site" evidence="2">
    <location>
        <position position="370"/>
    </location>
    <ligand>
        <name>Zn(2+)</name>
        <dbReference type="ChEBI" id="CHEBI:29105"/>
        <label>4</label>
    </ligand>
</feature>
<feature type="binding site" evidence="2">
    <location>
        <position position="377"/>
    </location>
    <ligand>
        <name>Zn(2+)</name>
        <dbReference type="ChEBI" id="CHEBI:29105"/>
        <label>4</label>
    </ligand>
</feature>
<feature type="binding site" evidence="2">
    <location>
        <position position="384"/>
    </location>
    <ligand>
        <name>Zn(2+)</name>
        <dbReference type="ChEBI" id="CHEBI:29105"/>
        <label>4</label>
    </ligand>
</feature>
<evidence type="ECO:0000250" key="1">
    <source>
        <dbReference type="UniProtKB" id="O60260"/>
    </source>
</evidence>
<evidence type="ECO:0000255" key="2">
    <source>
        <dbReference type="PROSITE-ProRule" id="PRU01221"/>
    </source>
</evidence>
<evidence type="ECO:0000269" key="3">
    <source>
    </source>
</evidence>
<evidence type="ECO:0000269" key="4">
    <source>
    </source>
</evidence>
<evidence type="ECO:0000303" key="5">
    <source>
    </source>
</evidence>
<evidence type="ECO:0000305" key="6"/>
<evidence type="ECO:0000305" key="7">
    <source>
    </source>
</evidence>
<evidence type="ECO:0000312" key="8">
    <source>
        <dbReference type="SGD" id="S000001725"/>
    </source>
</evidence>
<reference key="1">
    <citation type="journal article" date="1994" name="Nature">
        <title>Complete DNA sequence of yeast chromosome XI.</title>
        <authorList>
            <person name="Dujon B."/>
            <person name="Alexandraki D."/>
            <person name="Andre B."/>
            <person name="Ansorge W."/>
            <person name="Baladron V."/>
            <person name="Ballesta J.P.G."/>
            <person name="Banrevi A."/>
            <person name="Bolle P.-A."/>
            <person name="Bolotin-Fukuhara M."/>
            <person name="Bossier P."/>
            <person name="Bou G."/>
            <person name="Boyer J."/>
            <person name="Buitrago M.J."/>
            <person name="Cheret G."/>
            <person name="Colleaux L."/>
            <person name="Daignan-Fornier B."/>
            <person name="del Rey F."/>
            <person name="Dion C."/>
            <person name="Domdey H."/>
            <person name="Duesterhoeft A."/>
            <person name="Duesterhus S."/>
            <person name="Entian K.-D."/>
            <person name="Erfle H."/>
            <person name="Esteban P.F."/>
            <person name="Feldmann H."/>
            <person name="Fernandes L."/>
            <person name="Fobo G.M."/>
            <person name="Fritz C."/>
            <person name="Fukuhara H."/>
            <person name="Gabel C."/>
            <person name="Gaillon L."/>
            <person name="Garcia-Cantalejo J.M."/>
            <person name="Garcia-Ramirez J.J."/>
            <person name="Gent M.E."/>
            <person name="Ghazvini M."/>
            <person name="Goffeau A."/>
            <person name="Gonzalez A."/>
            <person name="Grothues D."/>
            <person name="Guerreiro P."/>
            <person name="Hegemann J.H."/>
            <person name="Hewitt N."/>
            <person name="Hilger F."/>
            <person name="Hollenberg C.P."/>
            <person name="Horaitis O."/>
            <person name="Indge K.J."/>
            <person name="Jacquier A."/>
            <person name="James C.M."/>
            <person name="Jauniaux J.-C."/>
            <person name="Jimenez A."/>
            <person name="Keuchel H."/>
            <person name="Kirchrath L."/>
            <person name="Kleine K."/>
            <person name="Koetter P."/>
            <person name="Legrain P."/>
            <person name="Liebl S."/>
            <person name="Louis E.J."/>
            <person name="Maia e Silva A."/>
            <person name="Marck C."/>
            <person name="Monnier A.-L."/>
            <person name="Moestl D."/>
            <person name="Mueller S."/>
            <person name="Obermaier B."/>
            <person name="Oliver S.G."/>
            <person name="Pallier C."/>
            <person name="Pascolo S."/>
            <person name="Pfeiffer F."/>
            <person name="Philippsen P."/>
            <person name="Planta R.J."/>
            <person name="Pohl F.M."/>
            <person name="Pohl T.M."/>
            <person name="Poehlmann R."/>
            <person name="Portetelle D."/>
            <person name="Purnelle B."/>
            <person name="Puzos V."/>
            <person name="Ramezani Rad M."/>
            <person name="Rasmussen S.W."/>
            <person name="Remacha M.A."/>
            <person name="Revuelta J.L."/>
            <person name="Richard G.-F."/>
            <person name="Rieger M."/>
            <person name="Rodrigues-Pousada C."/>
            <person name="Rose M."/>
            <person name="Rupp T."/>
            <person name="Santos M.A."/>
            <person name="Schwager C."/>
            <person name="Sensen C."/>
            <person name="Skala J."/>
            <person name="Soares H."/>
            <person name="Sor F."/>
            <person name="Stegemann J."/>
            <person name="Tettelin H."/>
            <person name="Thierry A."/>
            <person name="Tzermia M."/>
            <person name="Urrestarazu L.A."/>
            <person name="van Dyck L."/>
            <person name="van Vliet-Reedijk J.C."/>
            <person name="Valens M."/>
            <person name="Vandenbol M."/>
            <person name="Vilela C."/>
            <person name="Vissers S."/>
            <person name="von Wettstein D."/>
            <person name="Voss H."/>
            <person name="Wiemann S."/>
            <person name="Xu G."/>
            <person name="Zimmermann J."/>
            <person name="Haasemann M."/>
            <person name="Becker I."/>
            <person name="Mewes H.-W."/>
        </authorList>
    </citation>
    <scope>NUCLEOTIDE SEQUENCE [LARGE SCALE GENOMIC DNA]</scope>
    <source>
        <strain>ATCC 204508 / S288c</strain>
    </source>
</reference>
<reference key="2">
    <citation type="journal article" date="2014" name="G3 (Bethesda)">
        <title>The reference genome sequence of Saccharomyces cerevisiae: Then and now.</title>
        <authorList>
            <person name="Engel S.R."/>
            <person name="Dietrich F.S."/>
            <person name="Fisk D.G."/>
            <person name="Binkley G."/>
            <person name="Balakrishnan R."/>
            <person name="Costanzo M.C."/>
            <person name="Dwight S.S."/>
            <person name="Hitz B.C."/>
            <person name="Karra K."/>
            <person name="Nash R.S."/>
            <person name="Weng S."/>
            <person name="Wong E.D."/>
            <person name="Lloyd P."/>
            <person name="Skrzypek M.S."/>
            <person name="Miyasato S.R."/>
            <person name="Simison M."/>
            <person name="Cherry J.M."/>
        </authorList>
    </citation>
    <scope>GENOME REANNOTATION</scope>
    <source>
        <strain>ATCC 204508 / S288c</strain>
    </source>
</reference>
<reference key="3">
    <citation type="journal article" date="2003" name="Nature">
        <title>Global analysis of protein expression in yeast.</title>
        <authorList>
            <person name="Ghaemmaghami S."/>
            <person name="Huh W.-K."/>
            <person name="Bower K."/>
            <person name="Howson R.W."/>
            <person name="Belle A."/>
            <person name="Dephoure N."/>
            <person name="O'Shea E.K."/>
            <person name="Weissman J.S."/>
        </authorList>
    </citation>
    <scope>LEVEL OF PROTEIN EXPRESSION [LARGE SCALE ANALYSIS]</scope>
</reference>
<reference key="4">
    <citation type="journal article" date="2012" name="PLoS ONE">
        <title>Novel E3 ubiquitin ligases that regulate histone protein levels in the budding yeast Saccharomyces cerevisiae.</title>
        <authorList>
            <person name="Singh R.K."/>
            <person name="Gonzalez M."/>
            <person name="Kabbaj M.H."/>
            <person name="Gunjan A."/>
        </authorList>
    </citation>
    <scope>FUNCTION</scope>
    <scope>INTERACTION WITH UBC4</scope>
    <scope>INTERACTION WITH HISTONES H3 AND H4</scope>
</reference>
<comment type="function">
    <text evidence="4">Probable ubiquitin-protein ligase involved in the degradation-related ubiquitination of histones. Contributes to the post-translational regulation of histone protein levels by polyubiquitination of excess histones for subsequent degradation.</text>
</comment>
<comment type="catalytic activity">
    <reaction evidence="1">
        <text>[E2 ubiquitin-conjugating enzyme]-S-ubiquitinyl-L-cysteine + [acceptor protein]-L-lysine = [E2 ubiquitin-conjugating enzyme]-L-cysteine + [acceptor protein]-N(6)-ubiquitinyl-L-lysine.</text>
        <dbReference type="EC" id="2.3.2.31"/>
    </reaction>
</comment>
<comment type="pathway">
    <text evidence="6">Protein modification; protein ubiquitination.</text>
</comment>
<comment type="subunit">
    <text evidence="4">Interacts with the E2 ubiquitin-conjugating enzyme UBC4 and histones H3 and H4.</text>
</comment>
<comment type="domain">
    <text evidence="1">Members of the RBR family are atypical E3 ligases. They interact with the E2 conjugating enzyme UBE2L3 and function like HECT-type E3 enzymes: they bind E2s via the first RING domain, but require an obligate trans-thiolation step during the ubiquitin transfer, requiring a conserved cysteine residue in the second RING domain.</text>
</comment>
<comment type="miscellaneous">
    <text evidence="3">Present with 2250 molecules/cell in log phase SD medium.</text>
</comment>
<comment type="similarity">
    <text evidence="6">Belongs to the RBR family.</text>
</comment>
<organism>
    <name type="scientific">Saccharomyces cerevisiae (strain ATCC 204508 / S288c)</name>
    <name type="common">Baker's yeast</name>
    <dbReference type="NCBI Taxonomy" id="559292"/>
    <lineage>
        <taxon>Eukaryota</taxon>
        <taxon>Fungi</taxon>
        <taxon>Dikarya</taxon>
        <taxon>Ascomycota</taxon>
        <taxon>Saccharomycotina</taxon>
        <taxon>Saccharomycetes</taxon>
        <taxon>Saccharomycetales</taxon>
        <taxon>Saccharomycetaceae</taxon>
        <taxon>Saccharomyces</taxon>
    </lineage>
</organism>
<sequence>MSSGTENDQFYSFDESDSSSIELYESHNTSEFTIHGLVFPKLISVTSQDSEFDINEDEDGVDTIYEGMLDAPLTKNNKRILCEGSVPNLSYECLTTKGIFERMLQRVDHLQPIFAIPSADILILLQHYDWNEERLLEVWTEKMDELLVELGLSTTANIKKDNDYNSHFREVEFKNDFTCIICCDKKDTETFALECGHEYCINCYRHYIKDKLHEGNIITCMDCSLALKNEDIDKVMGHPSSSKLMDSSIKSFVQKHNRNYKWCPFADCKSIVHLRDTSSLPEYTRLHYSPFVKCNSFHRFCFNCGFEVHSPADCKITTAWVKKARKESEILNWVLSHTKECPKCSVNIEKNGGCNHMVCSSCKYEFCWICEGPWAPHGKNFFQCTMYKNNEDNKSKNPQDANKTLKKYTFYYRLFNEHEVSAKLDWNLGQTLGTKVHALQERIGISWIDGQFLSESLKVLNEGRTVLKWSFAVAYYSDASHNLTKIFVDNQMLLANAVESLSELLQIKTPEVIMKRRPEFYNKAGYVENRTTALMECGRELLCKGICKAAE</sequence>
<keyword id="KW-0479">Metal-binding</keyword>
<keyword id="KW-1185">Reference proteome</keyword>
<keyword id="KW-0677">Repeat</keyword>
<keyword id="KW-0808">Transferase</keyword>
<keyword id="KW-0833">Ubl conjugation pathway</keyword>
<keyword id="KW-0862">Zinc</keyword>
<keyword id="KW-0863">Zinc-finger</keyword>